<sequence>MSFICGLQSAARNHVFFRFNSLSNWRKCNTLASTSRGCHQVQVNHIVNKYQGLGVNQCDRWSFLPGNFHFYSTFNNKRTGGLSSTKSKEIWRITSKCTVWNDAFSRQLLIKEVTAVPSLSVLHPLSPASIRAIRNFHTSPRFQAAPVPLLLMILKPVQKLFAIIVGRGIRKWWQALPPNKKEVVKENIRKNKWKLFLGLSSFGLLFVVFYFTHLEVSPITGRSKLLLLGKEQFRLLSELEYEAWMEEFKNDMLTEKDARYLAVKEVLCHLIECNKDVPGISQINWVIHVVDSPIINAFVLPNGQMFVFTGFLNSVTDIHQLSFLLGHEIAHAVLGHAAEKAGMVHLLDFLGMIFLTMIWAICPRDSLALLCQWIQSKLQEYMFNRPYSRKLEAEADKIGLLLAAKACADIRASSVFWQQMEFVDSLHGQPKMPEWLSTHPSHGNRVEYLDRLIPQALKIREMCNCPPLSNPDPRLLFKLSTKHFLEESEKEDLNITKKQKMDTLPIQKQEQIPLTYIVEKRTGS</sequence>
<name>OMA1_HUMAN</name>
<keyword id="KW-0025">Alternative splicing</keyword>
<keyword id="KW-0068">Autocatalytic cleavage</keyword>
<keyword id="KW-1015">Disulfide bond</keyword>
<keyword id="KW-0378">Hydrolase</keyword>
<keyword id="KW-0446">Lipid-binding</keyword>
<keyword id="KW-0472">Membrane</keyword>
<keyword id="KW-0479">Metal-binding</keyword>
<keyword id="KW-0482">Metalloprotease</keyword>
<keyword id="KW-0496">Mitochondrion</keyword>
<keyword id="KW-0999">Mitochondrion inner membrane</keyword>
<keyword id="KW-0645">Protease</keyword>
<keyword id="KW-1267">Proteomics identification</keyword>
<keyword id="KW-1185">Reference proteome</keyword>
<keyword id="KW-0809">Transit peptide</keyword>
<keyword id="KW-0812">Transmembrane</keyword>
<keyword id="KW-1133">Transmembrane helix</keyword>
<keyword id="KW-0862">Zinc</keyword>
<keyword id="KW-0865">Zymogen</keyword>
<protein>
    <recommendedName>
        <fullName evidence="22">Metalloendopeptidase OMA1, mitochondrial</fullName>
        <ecNumber evidence="8 17 18">3.4.24.-</ecNumber>
    </recommendedName>
    <alternativeName>
        <fullName evidence="19">Metalloprotease-related protein 1</fullName>
        <shortName evidence="19">MPRP-1</shortName>
    </alternativeName>
    <alternativeName>
        <fullName evidence="21">Overlapping with the m-AAA protease 1 homolog</fullName>
    </alternativeName>
</protein>
<feature type="transit peptide" description="Mitochondrion" evidence="4">
    <location>
        <begin position="1"/>
        <end position="13"/>
    </location>
</feature>
<feature type="propeptide" id="PRO_0000450313" evidence="3">
    <location>
        <begin position="14"/>
        <end position="143"/>
    </location>
</feature>
<feature type="chain" id="PRO_0000302809" description="Metalloendopeptidase OMA1, mitochondrial">
    <location>
        <begin position="144"/>
        <end status="unknown"/>
    </location>
</feature>
<feature type="propeptide" id="PRO_0000450314" evidence="3">
    <location>
        <begin status="unknown"/>
        <end position="524"/>
    </location>
</feature>
<feature type="topological domain" description="Mitochondrial matrix" evidence="3">
    <location>
        <begin position="144"/>
        <end position="195"/>
    </location>
</feature>
<feature type="transmembrane region" description="Helical" evidence="4">
    <location>
        <begin position="196"/>
        <end position="216"/>
    </location>
</feature>
<feature type="topological domain" description="Mitochondrial intermembrane" evidence="3">
    <location>
        <begin position="217"/>
        <end status="unknown"/>
    </location>
</feature>
<feature type="region of interest" description="Cardiolipin-binding" evidence="3">
    <location>
        <begin position="148"/>
        <end position="167"/>
    </location>
</feature>
<feature type="region of interest" description="Stress-sensor region" evidence="3">
    <location>
        <begin position="165"/>
        <end position="195"/>
    </location>
</feature>
<feature type="active site" evidence="5 25">
    <location>
        <position position="328"/>
    </location>
</feature>
<feature type="binding site" evidence="5">
    <location>
        <position position="327"/>
    </location>
    <ligand>
        <name>Zn(2+)</name>
        <dbReference type="ChEBI" id="CHEBI:29105"/>
        <note>catalytic</note>
    </ligand>
</feature>
<feature type="binding site" evidence="1">
    <location>
        <position position="331"/>
    </location>
    <ligand>
        <name>Zn(2+)</name>
        <dbReference type="ChEBI" id="CHEBI:29105"/>
        <note>catalytic</note>
    </ligand>
</feature>
<feature type="binding site" evidence="5">
    <location>
        <position position="392"/>
    </location>
    <ligand>
        <name>Zn(2+)</name>
        <dbReference type="ChEBI" id="CHEBI:29105"/>
        <note>catalytic</note>
    </ligand>
</feature>
<feature type="disulfide bond" evidence="2">
    <location>
        <begin position="407"/>
        <end position="465"/>
    </location>
</feature>
<feature type="splice variant" id="VSP_027958" description="In isoform 2." evidence="20">
    <original>ALKIREMCNCPPLSNPDPRLLFKLSTKHFLEESEKEDLNITKKQKMDTLPIQKQEQIPLTYIVEKRTGS</original>
    <variation>LVREEKFIEQPEQIAELTLNSFIQNTEICRS</variation>
    <location>
        <begin position="456"/>
        <end position="524"/>
    </location>
</feature>
<feature type="sequence variant" id="VAR_034958" description="In dbSNP:rs34466938.">
    <original>N</original>
    <variation>K</variation>
    <location>
        <position position="67"/>
    </location>
</feature>
<feature type="sequence variant" id="VAR_065755" description="In a patient with amyotrophic lateral sclerosis; dbSNP:rs75220198." evidence="9">
    <original>H</original>
    <variation>Y</variation>
    <location>
        <position position="69"/>
    </location>
</feature>
<feature type="sequence variant" id="VAR_034959" description="In dbSNP:rs17117720." evidence="9">
    <original>P</original>
    <variation>L</variation>
    <location>
        <position position="117"/>
    </location>
</feature>
<feature type="sequence variant" id="VAR_034960" description="In dbSNP:rs17117699.">
    <original>F</original>
    <variation>C</variation>
    <location>
        <position position="211"/>
    </location>
</feature>
<feature type="sequence variant" id="VAR_035708" description="In a colorectal cancer sample; somatic mutation." evidence="7">
    <original>L</original>
    <variation>V</variation>
    <location>
        <position position="226"/>
    </location>
</feature>
<feature type="sequence variant" id="VAR_065756" description="In a patient with amyotrophic lateral sclerosis; dbSNP:rs139938730." evidence="9">
    <original>E</original>
    <variation>G</variation>
    <location>
        <position position="272"/>
    </location>
</feature>
<feature type="sequence variant" id="VAR_034961" description="In dbSNP:rs17117678." evidence="9">
    <original>I</original>
    <variation>L</variation>
    <location>
        <position position="329"/>
    </location>
</feature>
<feature type="sequence variant" id="VAR_065757" description="In dbSNP:rs77980955." evidence="9">
    <original>D</original>
    <variation>Y</variation>
    <location>
        <position position="365"/>
    </location>
</feature>
<feature type="mutagenesis site" description="Abolished protease activity and ability to mediate cleavage of DELE1 in response to mitochondrial stress. Abolished ability to mediate cleavage of PINK1 in depolarized mitochondria." evidence="14 17">
    <original>E</original>
    <variation>Q</variation>
    <location>
        <position position="328"/>
    </location>
</feature>
<feature type="mutagenesis site" description="Abolishes ability to cleave OPA1 at S1 position." evidence="8">
    <original>H</original>
    <variation>A</variation>
    <location>
        <position position="331"/>
    </location>
</feature>
<dbReference type="EC" id="3.4.24.-" evidence="8 17 18"/>
<dbReference type="EMBL" id="AB048348">
    <property type="protein sequence ID" value="BAC79381.1"/>
    <property type="molecule type" value="mRNA"/>
</dbReference>
<dbReference type="EMBL" id="AL109845">
    <property type="status" value="NOT_ANNOTATED_CDS"/>
    <property type="molecule type" value="Genomic_DNA"/>
</dbReference>
<dbReference type="EMBL" id="AL365187">
    <property type="status" value="NOT_ANNOTATED_CDS"/>
    <property type="molecule type" value="Genomic_DNA"/>
</dbReference>
<dbReference type="EMBL" id="CH471059">
    <property type="protein sequence ID" value="EAX06631.1"/>
    <property type="molecule type" value="Genomic_DNA"/>
</dbReference>
<dbReference type="EMBL" id="CH471059">
    <property type="protein sequence ID" value="EAX06632.1"/>
    <property type="molecule type" value="Genomic_DNA"/>
</dbReference>
<dbReference type="EMBL" id="CH471059">
    <property type="protein sequence ID" value="EAX06633.1"/>
    <property type="molecule type" value="Genomic_DNA"/>
</dbReference>
<dbReference type="EMBL" id="BC012915">
    <property type="protein sequence ID" value="AAH12915.1"/>
    <property type="molecule type" value="mRNA"/>
</dbReference>
<dbReference type="EMBL" id="AK091101">
    <property type="protein sequence ID" value="BAC03583.1"/>
    <property type="status" value="ALT_INIT"/>
    <property type="molecule type" value="mRNA"/>
</dbReference>
<dbReference type="CCDS" id="CCDS608.1">
    <molecule id="Q96E52-1"/>
</dbReference>
<dbReference type="RefSeq" id="NP_660286.1">
    <molecule id="Q96E52-1"/>
    <property type="nucleotide sequence ID" value="NM_145243.5"/>
</dbReference>
<dbReference type="SMR" id="Q96E52"/>
<dbReference type="BioGRID" id="125420">
    <property type="interactions" value="144"/>
</dbReference>
<dbReference type="FunCoup" id="Q96E52">
    <property type="interactions" value="730"/>
</dbReference>
<dbReference type="IntAct" id="Q96E52">
    <property type="interactions" value="135"/>
</dbReference>
<dbReference type="MINT" id="Q96E52"/>
<dbReference type="STRING" id="9606.ENSP00000360270"/>
<dbReference type="MEROPS" id="M48.017"/>
<dbReference type="TCDB" id="8.A.150.1.1">
    <property type="family name" value="the mitochondrial metalloendopeptidase oma1 (oma1) family"/>
</dbReference>
<dbReference type="iPTMnet" id="Q96E52"/>
<dbReference type="PhosphoSitePlus" id="Q96E52"/>
<dbReference type="SwissPalm" id="Q96E52"/>
<dbReference type="BioMuta" id="OMA1"/>
<dbReference type="DMDM" id="74751828"/>
<dbReference type="jPOST" id="Q96E52"/>
<dbReference type="MassIVE" id="Q96E52"/>
<dbReference type="PaxDb" id="9606-ENSP00000360270"/>
<dbReference type="PeptideAtlas" id="Q96E52"/>
<dbReference type="ProteomicsDB" id="76375">
    <molecule id="Q96E52-1"/>
</dbReference>
<dbReference type="ProteomicsDB" id="76376">
    <molecule id="Q96E52-2"/>
</dbReference>
<dbReference type="Pumba" id="Q96E52"/>
<dbReference type="Antibodypedia" id="46900">
    <property type="antibodies" value="88 antibodies from 25 providers"/>
</dbReference>
<dbReference type="DNASU" id="115209"/>
<dbReference type="Ensembl" id="ENST00000371226.8">
    <molecule id="Q96E52-1"/>
    <property type="protein sequence ID" value="ENSP00000360270.3"/>
    <property type="gene ID" value="ENSG00000162600.12"/>
</dbReference>
<dbReference type="GeneID" id="115209"/>
<dbReference type="KEGG" id="hsa:115209"/>
<dbReference type="MANE-Select" id="ENST00000371226.8">
    <property type="protein sequence ID" value="ENSP00000360270.3"/>
    <property type="RefSeq nucleotide sequence ID" value="NM_145243.5"/>
    <property type="RefSeq protein sequence ID" value="NP_660286.1"/>
</dbReference>
<dbReference type="UCSC" id="uc001cyy.4">
    <molecule id="Q96E52-1"/>
    <property type="organism name" value="human"/>
</dbReference>
<dbReference type="AGR" id="HGNC:29661"/>
<dbReference type="CTD" id="115209"/>
<dbReference type="DisGeNET" id="115209"/>
<dbReference type="GeneCards" id="OMA1"/>
<dbReference type="HGNC" id="HGNC:29661">
    <property type="gene designation" value="OMA1"/>
</dbReference>
<dbReference type="HPA" id="ENSG00000162600">
    <property type="expression patterns" value="Low tissue specificity"/>
</dbReference>
<dbReference type="neXtProt" id="NX_Q96E52"/>
<dbReference type="OpenTargets" id="ENSG00000162600"/>
<dbReference type="PharmGKB" id="PA134911478"/>
<dbReference type="VEuPathDB" id="HostDB:ENSG00000162600"/>
<dbReference type="eggNOG" id="KOG2661">
    <property type="taxonomic scope" value="Eukaryota"/>
</dbReference>
<dbReference type="GeneTree" id="ENSGT00390000007027"/>
<dbReference type="HOGENOM" id="CLU_039633_0_0_1"/>
<dbReference type="InParanoid" id="Q96E52"/>
<dbReference type="OMA" id="TFILGHE"/>
<dbReference type="OrthoDB" id="7464992at2759"/>
<dbReference type="PAN-GO" id="Q96E52">
    <property type="GO annotations" value="4 GO annotations based on evolutionary models"/>
</dbReference>
<dbReference type="PhylomeDB" id="Q96E52"/>
<dbReference type="TreeFam" id="TF329133"/>
<dbReference type="PathwayCommons" id="Q96E52"/>
<dbReference type="Reactome" id="R-HSA-169911">
    <property type="pathway name" value="Regulation of Apoptosis"/>
</dbReference>
<dbReference type="Reactome" id="R-HSA-9837999">
    <property type="pathway name" value="Mitochondrial protein degradation"/>
</dbReference>
<dbReference type="Reactome" id="R-HSA-9840373">
    <property type="pathway name" value="Cellular response to mitochondrial stress"/>
</dbReference>
<dbReference type="SignaLink" id="Q96E52"/>
<dbReference type="SIGNOR" id="Q96E52"/>
<dbReference type="BioGRID-ORCS" id="115209">
    <property type="hits" value="12 hits in 1160 CRISPR screens"/>
</dbReference>
<dbReference type="ChiTaRS" id="OMA1">
    <property type="organism name" value="human"/>
</dbReference>
<dbReference type="GenomeRNAi" id="115209"/>
<dbReference type="Pharos" id="Q96E52">
    <property type="development level" value="Tbio"/>
</dbReference>
<dbReference type="PRO" id="PR:Q96E52"/>
<dbReference type="Proteomes" id="UP000005640">
    <property type="component" value="Chromosome 1"/>
</dbReference>
<dbReference type="RNAct" id="Q96E52">
    <property type="molecule type" value="protein"/>
</dbReference>
<dbReference type="Bgee" id="ENSG00000162600">
    <property type="expression patterns" value="Expressed in bronchial epithelial cell and 184 other cell types or tissues"/>
</dbReference>
<dbReference type="ExpressionAtlas" id="Q96E52">
    <property type="expression patterns" value="baseline and differential"/>
</dbReference>
<dbReference type="GO" id="GO:0005743">
    <property type="term" value="C:mitochondrial inner membrane"/>
    <property type="evidence" value="ECO:0000314"/>
    <property type="project" value="UniProtKB"/>
</dbReference>
<dbReference type="GO" id="GO:0005758">
    <property type="term" value="C:mitochondrial intermembrane space"/>
    <property type="evidence" value="ECO:0000314"/>
    <property type="project" value="UniProt"/>
</dbReference>
<dbReference type="GO" id="GO:0031966">
    <property type="term" value="C:mitochondrial membrane"/>
    <property type="evidence" value="ECO:0000314"/>
    <property type="project" value="UniProtKB"/>
</dbReference>
<dbReference type="GO" id="GO:0005739">
    <property type="term" value="C:mitochondrion"/>
    <property type="evidence" value="ECO:0006056"/>
    <property type="project" value="FlyBase"/>
</dbReference>
<dbReference type="GO" id="GO:0008289">
    <property type="term" value="F:lipid binding"/>
    <property type="evidence" value="ECO:0007669"/>
    <property type="project" value="UniProtKB-KW"/>
</dbReference>
<dbReference type="GO" id="GO:0046872">
    <property type="term" value="F:metal ion binding"/>
    <property type="evidence" value="ECO:0007669"/>
    <property type="project" value="UniProtKB-KW"/>
</dbReference>
<dbReference type="GO" id="GO:0004222">
    <property type="term" value="F:metalloendopeptidase activity"/>
    <property type="evidence" value="ECO:0000314"/>
    <property type="project" value="UniProtKB"/>
</dbReference>
<dbReference type="GO" id="GO:0033554">
    <property type="term" value="P:cellular response to stress"/>
    <property type="evidence" value="ECO:0000314"/>
    <property type="project" value="UniProt"/>
</dbReference>
<dbReference type="GO" id="GO:0042407">
    <property type="term" value="P:cristae formation"/>
    <property type="evidence" value="ECO:0007669"/>
    <property type="project" value="Ensembl"/>
</dbReference>
<dbReference type="GO" id="GO:0002024">
    <property type="term" value="P:diet induced thermogenesis"/>
    <property type="evidence" value="ECO:0000250"/>
    <property type="project" value="UniProtKB"/>
</dbReference>
<dbReference type="GO" id="GO:0097009">
    <property type="term" value="P:energy homeostasis"/>
    <property type="evidence" value="ECO:0000250"/>
    <property type="project" value="UniProtKB"/>
</dbReference>
<dbReference type="GO" id="GO:0006006">
    <property type="term" value="P:glucose metabolic process"/>
    <property type="evidence" value="ECO:0000250"/>
    <property type="project" value="UniProtKB"/>
</dbReference>
<dbReference type="GO" id="GO:0140468">
    <property type="term" value="P:HRI-mediated signaling"/>
    <property type="evidence" value="ECO:0000314"/>
    <property type="project" value="UniProtKB"/>
</dbReference>
<dbReference type="GO" id="GO:0140467">
    <property type="term" value="P:integrated stress response signaling"/>
    <property type="evidence" value="ECO:0000314"/>
    <property type="project" value="UniProtKB"/>
</dbReference>
<dbReference type="GO" id="GO:0006629">
    <property type="term" value="P:lipid metabolic process"/>
    <property type="evidence" value="ECO:0000250"/>
    <property type="project" value="UniProtKB"/>
</dbReference>
<dbReference type="GO" id="GO:0034982">
    <property type="term" value="P:mitochondrial protein processing"/>
    <property type="evidence" value="ECO:0000314"/>
    <property type="project" value="UniProtKB"/>
</dbReference>
<dbReference type="GO" id="GO:0033108">
    <property type="term" value="P:mitochondrial respiratory chain complex assembly"/>
    <property type="evidence" value="ECO:0000250"/>
    <property type="project" value="UniProtKB"/>
</dbReference>
<dbReference type="GO" id="GO:0010637">
    <property type="term" value="P:negative regulation of mitochondrial fusion"/>
    <property type="evidence" value="ECO:0000315"/>
    <property type="project" value="UniProtKB"/>
</dbReference>
<dbReference type="GO" id="GO:0043065">
    <property type="term" value="P:positive regulation of apoptotic process"/>
    <property type="evidence" value="ECO:0000314"/>
    <property type="project" value="UniProtKB"/>
</dbReference>
<dbReference type="GO" id="GO:0120162">
    <property type="term" value="P:positive regulation of cold-induced thermogenesis"/>
    <property type="evidence" value="ECO:0000250"/>
    <property type="project" value="YuBioLab"/>
</dbReference>
<dbReference type="GO" id="GO:0016540">
    <property type="term" value="P:protein autoprocessing"/>
    <property type="evidence" value="ECO:0000250"/>
    <property type="project" value="UniProtKB"/>
</dbReference>
<dbReference type="GO" id="GO:0006515">
    <property type="term" value="P:protein quality control for misfolded or incompletely synthesized proteins"/>
    <property type="evidence" value="ECO:0000315"/>
    <property type="project" value="UniProtKB"/>
</dbReference>
<dbReference type="GO" id="GO:1903850">
    <property type="term" value="P:regulation of cristae formation"/>
    <property type="evidence" value="ECO:0000314"/>
    <property type="project" value="UniProtKB"/>
</dbReference>
<dbReference type="GO" id="GO:0031638">
    <property type="term" value="P:zymogen activation"/>
    <property type="evidence" value="ECO:0000250"/>
    <property type="project" value="UniProtKB"/>
</dbReference>
<dbReference type="CDD" id="cd07331">
    <property type="entry name" value="M48C_Oma1_like"/>
    <property type="match status" value="1"/>
</dbReference>
<dbReference type="FunFam" id="3.30.2010.10:FF:000009">
    <property type="entry name" value="metalloendopeptidase OMA1, mitochondrial isoform X1"/>
    <property type="match status" value="1"/>
</dbReference>
<dbReference type="Gene3D" id="3.30.2010.10">
    <property type="entry name" value="Metalloproteases ('zincins'), catalytic domain"/>
    <property type="match status" value="1"/>
</dbReference>
<dbReference type="InterPro" id="IPR051156">
    <property type="entry name" value="Mito/Outer_Membr_Metalloprot"/>
</dbReference>
<dbReference type="InterPro" id="IPR001915">
    <property type="entry name" value="Peptidase_M48"/>
</dbReference>
<dbReference type="PANTHER" id="PTHR22726">
    <property type="entry name" value="METALLOENDOPEPTIDASE OMA1"/>
    <property type="match status" value="1"/>
</dbReference>
<dbReference type="PANTHER" id="PTHR22726:SF1">
    <property type="entry name" value="METALLOENDOPEPTIDASE OMA1, MITOCHONDRIAL"/>
    <property type="match status" value="1"/>
</dbReference>
<dbReference type="Pfam" id="PF01435">
    <property type="entry name" value="Peptidase_M48"/>
    <property type="match status" value="1"/>
</dbReference>
<dbReference type="PROSITE" id="PS00142">
    <property type="entry name" value="ZINC_PROTEASE"/>
    <property type="match status" value="1"/>
</dbReference>
<gene>
    <name evidence="21 26" type="primary">OMA1</name>
    <name evidence="19" type="synonym">MPRP1</name>
</gene>
<evidence type="ECO:0000250" key="1">
    <source>
        <dbReference type="UniProtKB" id="O75844"/>
    </source>
</evidence>
<evidence type="ECO:0000250" key="2">
    <source>
        <dbReference type="UniProtKB" id="P36163"/>
    </source>
</evidence>
<evidence type="ECO:0000250" key="3">
    <source>
        <dbReference type="UniProtKB" id="Q9D8H7"/>
    </source>
</evidence>
<evidence type="ECO:0000255" key="4"/>
<evidence type="ECO:0000255" key="5">
    <source>
        <dbReference type="PROSITE-ProRule" id="PRU10095"/>
    </source>
</evidence>
<evidence type="ECO:0000269" key="6">
    <source>
    </source>
</evidence>
<evidence type="ECO:0000269" key="7">
    <source>
    </source>
</evidence>
<evidence type="ECO:0000269" key="8">
    <source>
    </source>
</evidence>
<evidence type="ECO:0000269" key="9">
    <source>
    </source>
</evidence>
<evidence type="ECO:0000269" key="10">
    <source>
    </source>
</evidence>
<evidence type="ECO:0000269" key="11">
    <source>
    </source>
</evidence>
<evidence type="ECO:0000269" key="12">
    <source>
    </source>
</evidence>
<evidence type="ECO:0000269" key="13">
    <source>
    </source>
</evidence>
<evidence type="ECO:0000269" key="14">
    <source>
    </source>
</evidence>
<evidence type="ECO:0000269" key="15">
    <source>
    </source>
</evidence>
<evidence type="ECO:0000269" key="16">
    <source>
    </source>
</evidence>
<evidence type="ECO:0000269" key="17">
    <source>
    </source>
</evidence>
<evidence type="ECO:0000269" key="18">
    <source>
    </source>
</evidence>
<evidence type="ECO:0000303" key="19">
    <source>
    </source>
</evidence>
<evidence type="ECO:0000303" key="20">
    <source>
    </source>
</evidence>
<evidence type="ECO:0000303" key="21">
    <source>
    </source>
</evidence>
<evidence type="ECO:0000305" key="22"/>
<evidence type="ECO:0000305" key="23">
    <source>
    </source>
</evidence>
<evidence type="ECO:0000305" key="24">
    <source>
    </source>
</evidence>
<evidence type="ECO:0000305" key="25">
    <source>
    </source>
</evidence>
<evidence type="ECO:0000312" key="26">
    <source>
        <dbReference type="HGNC" id="HGNC:29661"/>
    </source>
</evidence>
<accession>Q96E52</accession>
<accession>D3DQ54</accession>
<accession>Q5T3G6</accession>
<accession>Q5T3G7</accession>
<accession>Q5T3G8</accession>
<accession>Q5T3G9</accession>
<accession>Q5T3H0</accession>
<accession>Q8NBB3</accession>
<organism>
    <name type="scientific">Homo sapiens</name>
    <name type="common">Human</name>
    <dbReference type="NCBI Taxonomy" id="9606"/>
    <lineage>
        <taxon>Eukaryota</taxon>
        <taxon>Metazoa</taxon>
        <taxon>Chordata</taxon>
        <taxon>Craniata</taxon>
        <taxon>Vertebrata</taxon>
        <taxon>Euteleostomi</taxon>
        <taxon>Mammalia</taxon>
        <taxon>Eutheria</taxon>
        <taxon>Euarchontoglires</taxon>
        <taxon>Primates</taxon>
        <taxon>Haplorrhini</taxon>
        <taxon>Catarrhini</taxon>
        <taxon>Hominidae</taxon>
        <taxon>Homo</taxon>
    </lineage>
</organism>
<proteinExistence type="evidence at protein level"/>
<reference key="1">
    <citation type="journal article" date="2003" name="DNA Res.">
        <title>Identification of a human cDNA sequence which encodes a novel membrane-associated protein containing a zinc metalloprotease motif.</title>
        <authorList>
            <person name="Bao Y.-C."/>
            <person name="Tsuruga H."/>
            <person name="Hirai M."/>
            <person name="Yasuda K."/>
            <person name="Yokoi N."/>
            <person name="Kitamura T."/>
            <person name="Kumagai H."/>
        </authorList>
    </citation>
    <scope>NUCLEOTIDE SEQUENCE [MRNA] (ISOFORM 1)</scope>
    <scope>TISSUE SPECIFICITY</scope>
</reference>
<reference key="2">
    <citation type="journal article" date="2006" name="Nature">
        <title>The DNA sequence and biological annotation of human chromosome 1.</title>
        <authorList>
            <person name="Gregory S.G."/>
            <person name="Barlow K.F."/>
            <person name="McLay K.E."/>
            <person name="Kaul R."/>
            <person name="Swarbreck D."/>
            <person name="Dunham A."/>
            <person name="Scott C.E."/>
            <person name="Howe K.L."/>
            <person name="Woodfine K."/>
            <person name="Spencer C.C.A."/>
            <person name="Jones M.C."/>
            <person name="Gillson C."/>
            <person name="Searle S."/>
            <person name="Zhou Y."/>
            <person name="Kokocinski F."/>
            <person name="McDonald L."/>
            <person name="Evans R."/>
            <person name="Phillips K."/>
            <person name="Atkinson A."/>
            <person name="Cooper R."/>
            <person name="Jones C."/>
            <person name="Hall R.E."/>
            <person name="Andrews T.D."/>
            <person name="Lloyd C."/>
            <person name="Ainscough R."/>
            <person name="Almeida J.P."/>
            <person name="Ambrose K.D."/>
            <person name="Anderson F."/>
            <person name="Andrew R.W."/>
            <person name="Ashwell R.I.S."/>
            <person name="Aubin K."/>
            <person name="Babbage A.K."/>
            <person name="Bagguley C.L."/>
            <person name="Bailey J."/>
            <person name="Beasley H."/>
            <person name="Bethel G."/>
            <person name="Bird C.P."/>
            <person name="Bray-Allen S."/>
            <person name="Brown J.Y."/>
            <person name="Brown A.J."/>
            <person name="Buckley D."/>
            <person name="Burton J."/>
            <person name="Bye J."/>
            <person name="Carder C."/>
            <person name="Chapman J.C."/>
            <person name="Clark S.Y."/>
            <person name="Clarke G."/>
            <person name="Clee C."/>
            <person name="Cobley V."/>
            <person name="Collier R.E."/>
            <person name="Corby N."/>
            <person name="Coville G.J."/>
            <person name="Davies J."/>
            <person name="Deadman R."/>
            <person name="Dunn M."/>
            <person name="Earthrowl M."/>
            <person name="Ellington A.G."/>
            <person name="Errington H."/>
            <person name="Frankish A."/>
            <person name="Frankland J."/>
            <person name="French L."/>
            <person name="Garner P."/>
            <person name="Garnett J."/>
            <person name="Gay L."/>
            <person name="Ghori M.R.J."/>
            <person name="Gibson R."/>
            <person name="Gilby L.M."/>
            <person name="Gillett W."/>
            <person name="Glithero R.J."/>
            <person name="Grafham D.V."/>
            <person name="Griffiths C."/>
            <person name="Griffiths-Jones S."/>
            <person name="Grocock R."/>
            <person name="Hammond S."/>
            <person name="Harrison E.S.I."/>
            <person name="Hart E."/>
            <person name="Haugen E."/>
            <person name="Heath P.D."/>
            <person name="Holmes S."/>
            <person name="Holt K."/>
            <person name="Howden P.J."/>
            <person name="Hunt A.R."/>
            <person name="Hunt S.E."/>
            <person name="Hunter G."/>
            <person name="Isherwood J."/>
            <person name="James R."/>
            <person name="Johnson C."/>
            <person name="Johnson D."/>
            <person name="Joy A."/>
            <person name="Kay M."/>
            <person name="Kershaw J.K."/>
            <person name="Kibukawa M."/>
            <person name="Kimberley A.M."/>
            <person name="King A."/>
            <person name="Knights A.J."/>
            <person name="Lad H."/>
            <person name="Laird G."/>
            <person name="Lawlor S."/>
            <person name="Leongamornlert D.A."/>
            <person name="Lloyd D.M."/>
            <person name="Loveland J."/>
            <person name="Lovell J."/>
            <person name="Lush M.J."/>
            <person name="Lyne R."/>
            <person name="Martin S."/>
            <person name="Mashreghi-Mohammadi M."/>
            <person name="Matthews L."/>
            <person name="Matthews N.S.W."/>
            <person name="McLaren S."/>
            <person name="Milne S."/>
            <person name="Mistry S."/>
            <person name="Moore M.J.F."/>
            <person name="Nickerson T."/>
            <person name="O'Dell C.N."/>
            <person name="Oliver K."/>
            <person name="Palmeiri A."/>
            <person name="Palmer S.A."/>
            <person name="Parker A."/>
            <person name="Patel D."/>
            <person name="Pearce A.V."/>
            <person name="Peck A.I."/>
            <person name="Pelan S."/>
            <person name="Phelps K."/>
            <person name="Phillimore B.J."/>
            <person name="Plumb R."/>
            <person name="Rajan J."/>
            <person name="Raymond C."/>
            <person name="Rouse G."/>
            <person name="Saenphimmachak C."/>
            <person name="Sehra H.K."/>
            <person name="Sheridan E."/>
            <person name="Shownkeen R."/>
            <person name="Sims S."/>
            <person name="Skuce C.D."/>
            <person name="Smith M."/>
            <person name="Steward C."/>
            <person name="Subramanian S."/>
            <person name="Sycamore N."/>
            <person name="Tracey A."/>
            <person name="Tromans A."/>
            <person name="Van Helmond Z."/>
            <person name="Wall M."/>
            <person name="Wallis J.M."/>
            <person name="White S."/>
            <person name="Whitehead S.L."/>
            <person name="Wilkinson J.E."/>
            <person name="Willey D.L."/>
            <person name="Williams H."/>
            <person name="Wilming L."/>
            <person name="Wray P.W."/>
            <person name="Wu Z."/>
            <person name="Coulson A."/>
            <person name="Vaudin M."/>
            <person name="Sulston J.E."/>
            <person name="Durbin R.M."/>
            <person name="Hubbard T."/>
            <person name="Wooster R."/>
            <person name="Dunham I."/>
            <person name="Carter N.P."/>
            <person name="McVean G."/>
            <person name="Ross M.T."/>
            <person name="Harrow J."/>
            <person name="Olson M.V."/>
            <person name="Beck S."/>
            <person name="Rogers J."/>
            <person name="Bentley D.R."/>
        </authorList>
    </citation>
    <scope>NUCLEOTIDE SEQUENCE [LARGE SCALE GENOMIC DNA]</scope>
</reference>
<reference key="3">
    <citation type="submission" date="2005-09" db="EMBL/GenBank/DDBJ databases">
        <authorList>
            <person name="Mural R.J."/>
            <person name="Istrail S."/>
            <person name="Sutton G.G."/>
            <person name="Florea L."/>
            <person name="Halpern A.L."/>
            <person name="Mobarry C.M."/>
            <person name="Lippert R."/>
            <person name="Walenz B."/>
            <person name="Shatkay H."/>
            <person name="Dew I."/>
            <person name="Miller J.R."/>
            <person name="Flanigan M.J."/>
            <person name="Edwards N.J."/>
            <person name="Bolanos R."/>
            <person name="Fasulo D."/>
            <person name="Halldorsson B.V."/>
            <person name="Hannenhalli S."/>
            <person name="Turner R."/>
            <person name="Yooseph S."/>
            <person name="Lu F."/>
            <person name="Nusskern D.R."/>
            <person name="Shue B.C."/>
            <person name="Zheng X.H."/>
            <person name="Zhong F."/>
            <person name="Delcher A.L."/>
            <person name="Huson D.H."/>
            <person name="Kravitz S.A."/>
            <person name="Mouchard L."/>
            <person name="Reinert K."/>
            <person name="Remington K.A."/>
            <person name="Clark A.G."/>
            <person name="Waterman M.S."/>
            <person name="Eichler E.E."/>
            <person name="Adams M.D."/>
            <person name="Hunkapiller M.W."/>
            <person name="Myers E.W."/>
            <person name="Venter J.C."/>
        </authorList>
    </citation>
    <scope>NUCLEOTIDE SEQUENCE [LARGE SCALE GENOMIC DNA]</scope>
</reference>
<reference key="4">
    <citation type="journal article" date="2004" name="Genome Res.">
        <title>The status, quality, and expansion of the NIH full-length cDNA project: the Mammalian Gene Collection (MGC).</title>
        <authorList>
            <consortium name="The MGC Project Team"/>
        </authorList>
    </citation>
    <scope>NUCLEOTIDE SEQUENCE [LARGE SCALE MRNA] (ISOFORM 1)</scope>
    <source>
        <tissue>Liver</tissue>
    </source>
</reference>
<reference key="5">
    <citation type="journal article" date="2004" name="Nat. Genet.">
        <title>Complete sequencing and characterization of 21,243 full-length human cDNAs.</title>
        <authorList>
            <person name="Ota T."/>
            <person name="Suzuki Y."/>
            <person name="Nishikawa T."/>
            <person name="Otsuki T."/>
            <person name="Sugiyama T."/>
            <person name="Irie R."/>
            <person name="Wakamatsu A."/>
            <person name="Hayashi K."/>
            <person name="Sato H."/>
            <person name="Nagai K."/>
            <person name="Kimura K."/>
            <person name="Makita H."/>
            <person name="Sekine M."/>
            <person name="Obayashi M."/>
            <person name="Nishi T."/>
            <person name="Shibahara T."/>
            <person name="Tanaka T."/>
            <person name="Ishii S."/>
            <person name="Yamamoto J."/>
            <person name="Saito K."/>
            <person name="Kawai Y."/>
            <person name="Isono Y."/>
            <person name="Nakamura Y."/>
            <person name="Nagahari K."/>
            <person name="Murakami K."/>
            <person name="Yasuda T."/>
            <person name="Iwayanagi T."/>
            <person name="Wagatsuma M."/>
            <person name="Shiratori A."/>
            <person name="Sudo H."/>
            <person name="Hosoiri T."/>
            <person name="Kaku Y."/>
            <person name="Kodaira H."/>
            <person name="Kondo H."/>
            <person name="Sugawara M."/>
            <person name="Takahashi M."/>
            <person name="Kanda K."/>
            <person name="Yokoi T."/>
            <person name="Furuya T."/>
            <person name="Kikkawa E."/>
            <person name="Omura Y."/>
            <person name="Abe K."/>
            <person name="Kamihara K."/>
            <person name="Katsuta N."/>
            <person name="Sato K."/>
            <person name="Tanikawa M."/>
            <person name="Yamazaki M."/>
            <person name="Ninomiya K."/>
            <person name="Ishibashi T."/>
            <person name="Yamashita H."/>
            <person name="Murakawa K."/>
            <person name="Fujimori K."/>
            <person name="Tanai H."/>
            <person name="Kimata M."/>
            <person name="Watanabe M."/>
            <person name="Hiraoka S."/>
            <person name="Chiba Y."/>
            <person name="Ishida S."/>
            <person name="Ono Y."/>
            <person name="Takiguchi S."/>
            <person name="Watanabe S."/>
            <person name="Yosida M."/>
            <person name="Hotuta T."/>
            <person name="Kusano J."/>
            <person name="Kanehori K."/>
            <person name="Takahashi-Fujii A."/>
            <person name="Hara H."/>
            <person name="Tanase T.-O."/>
            <person name="Nomura Y."/>
            <person name="Togiya S."/>
            <person name="Komai F."/>
            <person name="Hara R."/>
            <person name="Takeuchi K."/>
            <person name="Arita M."/>
            <person name="Imose N."/>
            <person name="Musashino K."/>
            <person name="Yuuki H."/>
            <person name="Oshima A."/>
            <person name="Sasaki N."/>
            <person name="Aotsuka S."/>
            <person name="Yoshikawa Y."/>
            <person name="Matsunawa H."/>
            <person name="Ichihara T."/>
            <person name="Shiohata N."/>
            <person name="Sano S."/>
            <person name="Moriya S."/>
            <person name="Momiyama H."/>
            <person name="Satoh N."/>
            <person name="Takami S."/>
            <person name="Terashima Y."/>
            <person name="Suzuki O."/>
            <person name="Nakagawa S."/>
            <person name="Senoh A."/>
            <person name="Mizoguchi H."/>
            <person name="Goto Y."/>
            <person name="Shimizu F."/>
            <person name="Wakebe H."/>
            <person name="Hishigaki H."/>
            <person name="Watanabe T."/>
            <person name="Sugiyama A."/>
            <person name="Takemoto M."/>
            <person name="Kawakami B."/>
            <person name="Yamazaki M."/>
            <person name="Watanabe K."/>
            <person name="Kumagai A."/>
            <person name="Itakura S."/>
            <person name="Fukuzumi Y."/>
            <person name="Fujimori Y."/>
            <person name="Komiyama M."/>
            <person name="Tashiro H."/>
            <person name="Tanigami A."/>
            <person name="Fujiwara T."/>
            <person name="Ono T."/>
            <person name="Yamada K."/>
            <person name="Fujii Y."/>
            <person name="Ozaki K."/>
            <person name="Hirao M."/>
            <person name="Ohmori Y."/>
            <person name="Kawabata A."/>
            <person name="Hikiji T."/>
            <person name="Kobatake N."/>
            <person name="Inagaki H."/>
            <person name="Ikema Y."/>
            <person name="Okamoto S."/>
            <person name="Okitani R."/>
            <person name="Kawakami T."/>
            <person name="Noguchi S."/>
            <person name="Itoh T."/>
            <person name="Shigeta K."/>
            <person name="Senba T."/>
            <person name="Matsumura K."/>
            <person name="Nakajima Y."/>
            <person name="Mizuno T."/>
            <person name="Morinaga M."/>
            <person name="Sasaki M."/>
            <person name="Togashi T."/>
            <person name="Oyama M."/>
            <person name="Hata H."/>
            <person name="Watanabe M."/>
            <person name="Komatsu T."/>
            <person name="Mizushima-Sugano J."/>
            <person name="Satoh T."/>
            <person name="Shirai Y."/>
            <person name="Takahashi Y."/>
            <person name="Nakagawa K."/>
            <person name="Okumura K."/>
            <person name="Nagase T."/>
            <person name="Nomura N."/>
            <person name="Kikuchi H."/>
            <person name="Masuho Y."/>
            <person name="Yamashita R."/>
            <person name="Nakai K."/>
            <person name="Yada T."/>
            <person name="Nakamura Y."/>
            <person name="Ohara O."/>
            <person name="Isogai T."/>
            <person name="Sugano S."/>
        </authorList>
    </citation>
    <scope>NUCLEOTIDE SEQUENCE [LARGE SCALE MRNA] OF 160-524 (ISOFORM 2)</scope>
    <source>
        <tissue>Substantia nigra</tissue>
    </source>
</reference>
<reference key="6">
    <citation type="journal article" date="2009" name="J. Cell Biol.">
        <title>Inducible proteolytic inactivation of OPA1 mediated by the OMA1 protease in mammalian cells.</title>
        <authorList>
            <person name="Head B."/>
            <person name="Griparic L."/>
            <person name="Amiri M."/>
            <person name="Gandre-Babbe S."/>
            <person name="van der Bliek A.M."/>
        </authorList>
    </citation>
    <scope>FUNCTION</scope>
    <scope>SUBCELLULAR LOCATION</scope>
    <scope>PROTEOLYTIC PROCESSING</scope>
    <scope>MUTAGENESIS OF HIS-331</scope>
</reference>
<reference key="7">
    <citation type="journal article" date="2014" name="Proc. Natl. Acad. Sci. U.S.A.">
        <title>Activation of mitochondrial protease OMA1 by Bax and Bak promotes cytochrome c release during apoptosis.</title>
        <authorList>
            <person name="Jiang X."/>
            <person name="Jiang H."/>
            <person name="Shen Z."/>
            <person name="Wang X."/>
        </authorList>
    </citation>
    <scope>FUNCTION</scope>
</reference>
<reference key="8">
    <citation type="journal article" date="2015" name="Mol. Cell. Biol.">
        <title>C11orf83, a mitochondrial cardiolipin-binding protein involved in bc1 complex assembly and supercomplex stabilization.</title>
        <authorList>
            <person name="Desmurs M."/>
            <person name="Foti M."/>
            <person name="Raemy E."/>
            <person name="Vaz F.M."/>
            <person name="Martinou J.C."/>
            <person name="Bairoch A."/>
            <person name="Lane L."/>
        </authorList>
    </citation>
    <scope>FUNCTION</scope>
</reference>
<reference key="9">
    <citation type="journal article" date="2016" name="Cell Rep.">
        <title>Reciprocal Degradation of YME1L and OMA1 Adapts Mitochondrial Proteolytic Activity during Stress.</title>
        <authorList>
            <person name="Rainbolt T.K."/>
            <person name="Lebeau J."/>
            <person name="Puchades C."/>
            <person name="Wiseman R.L."/>
        </authorList>
    </citation>
    <scope>PROTEOLYTIC CLEAVAGE</scope>
</reference>
<reference key="10">
    <citation type="journal article" date="2015" name="Proteomics">
        <title>N-terminome analysis of the human mitochondrial proteome.</title>
        <authorList>
            <person name="Vaca Jacome A.S."/>
            <person name="Rabilloud T."/>
            <person name="Schaeffer-Reiss C."/>
            <person name="Rompais M."/>
            <person name="Ayoub D."/>
            <person name="Lane L."/>
            <person name="Bairoch A."/>
            <person name="Van Dorsselaer A."/>
            <person name="Carapito C."/>
        </authorList>
    </citation>
    <scope>IDENTIFICATION BY MASS SPECTROMETRY [LARGE SCALE ANALYSIS]</scope>
</reference>
<reference key="11">
    <citation type="journal article" date="2018" name="J. Cell Sci.">
        <title>m-AAA and i-AAA complexes coordinate to regulate OMA1, the stress-activated supervisor of mitochondrial dynamics.</title>
        <authorList>
            <person name="Consolato F."/>
            <person name="Maltecca F."/>
            <person name="Tulli S."/>
            <person name="Sambri I."/>
            <person name="Casari G."/>
        </authorList>
    </citation>
    <scope>PROTEOLYTIC CLEAVAGE</scope>
</reference>
<reference key="12">
    <citation type="journal article" date="2019" name="Antioxid. Redox Signal.">
        <title>Redox regulation of the mitochondrial quality control protease Oma1.</title>
        <authorList>
            <person name="Bohovych I."/>
            <person name="Dietz J.V."/>
            <person name="Swenson S."/>
            <person name="Zahayko N."/>
            <person name="Khalimonchuk O."/>
        </authorList>
    </citation>
    <scope>REDOX-DEPENDENT REGULATION</scope>
</reference>
<reference key="13">
    <citation type="journal article" date="2019" name="Mol. Cell">
        <title>Reciprocal roles of Tom7 and OMA1 during mitochondrial import and activation of PINK1.</title>
        <authorList>
            <person name="Sekine S."/>
            <person name="Wang C."/>
            <person name="Sideris D.P."/>
            <person name="Bunker E."/>
            <person name="Zhang Z."/>
            <person name="Youle R.J."/>
        </authorList>
    </citation>
    <scope>FUNCTION</scope>
    <scope>MUTAGENESIS OF GLU-328</scope>
</reference>
<reference key="14">
    <citation type="journal article" date="2020" name="Nature">
        <title>A pathway coordinated by DELE1 relays mitochondrial stress to the cytosol.</title>
        <authorList>
            <person name="Fessler E."/>
            <person name="Eckl E.M."/>
            <person name="Schmitt S."/>
            <person name="Mancilla I.A."/>
            <person name="Meyer-Bender M.F."/>
            <person name="Hanf M."/>
            <person name="Philippou-Massier J."/>
            <person name="Krebs S."/>
            <person name="Zischka H."/>
            <person name="Jae L.T."/>
        </authorList>
    </citation>
    <scope>FUNCTION</scope>
    <scope>CATALYTIC ACTIVITY</scope>
    <scope>ACTIVE SITE</scope>
    <scope>MUTAGENESIS OF GLU-328</scope>
</reference>
<reference key="15">
    <citation type="journal article" date="2020" name="Nature">
        <title>Mitochondrial stress is relayed to the cytosol by an OMA1-DELE1-HRI pathway.</title>
        <authorList>
            <person name="Guo X."/>
            <person name="Aviles G."/>
            <person name="Liu Y."/>
            <person name="Tian R."/>
            <person name="Unger B.A."/>
            <person name="Lin Y.T."/>
            <person name="Wiita A.P."/>
            <person name="Xu K."/>
            <person name="Correia M.A."/>
            <person name="Kampmann M."/>
        </authorList>
    </citation>
    <scope>FUNCTION</scope>
    <scope>CATALYTIC ACTIVITY</scope>
    <scope>SUBCELLULAR LOCATION</scope>
</reference>
<reference key="16">
    <citation type="journal article" date="2020" name="Elife">
        <title>Two forms of Opa1 cooperate to complete fusion of the mitochondrial inner-membrane.</title>
        <authorList>
            <person name="Ge Y."/>
            <person name="Shi X."/>
            <person name="Boopathy S."/>
            <person name="McDonald J."/>
            <person name="Smith A.W."/>
            <person name="Chao L.H."/>
        </authorList>
    </citation>
    <scope>FUNCTION</scope>
</reference>
<reference key="17">
    <citation type="journal article" date="2006" name="Science">
        <title>The consensus coding sequences of human breast and colorectal cancers.</title>
        <authorList>
            <person name="Sjoeblom T."/>
            <person name="Jones S."/>
            <person name="Wood L.D."/>
            <person name="Parsons D.W."/>
            <person name="Lin J."/>
            <person name="Barber T.D."/>
            <person name="Mandelker D."/>
            <person name="Leary R.J."/>
            <person name="Ptak J."/>
            <person name="Silliman N."/>
            <person name="Szabo S."/>
            <person name="Buckhaults P."/>
            <person name="Farrell C."/>
            <person name="Meeh P."/>
            <person name="Markowitz S.D."/>
            <person name="Willis J."/>
            <person name="Dawson D."/>
            <person name="Willson J.K.V."/>
            <person name="Gazdar A.F."/>
            <person name="Hartigan J."/>
            <person name="Wu L."/>
            <person name="Liu C."/>
            <person name="Parmigiani G."/>
            <person name="Park B.H."/>
            <person name="Bachman K.E."/>
            <person name="Papadopoulos N."/>
            <person name="Vogelstein B."/>
            <person name="Kinzler K.W."/>
            <person name="Velculescu V.E."/>
        </authorList>
    </citation>
    <scope>VARIANT [LARGE SCALE ANALYSIS] VAL-226</scope>
</reference>
<reference key="18">
    <citation type="journal article" date="2011" name="Arch. Neurol.">
        <title>Resequencing of 29 candidate genes in patients with familial and sporadic amyotrophic lateral sclerosis.</title>
        <authorList>
            <person name="Daoud H."/>
            <person name="Valdmanis P.N."/>
            <person name="Gros-Louis F."/>
            <person name="Belzil V."/>
            <person name="Spiegelman D."/>
            <person name="Henrion E."/>
            <person name="Diallo O."/>
            <person name="Desjarlais A."/>
            <person name="Gauthier J."/>
            <person name="Camu W."/>
            <person name="Dion P.A."/>
            <person name="Rouleau G.A."/>
        </authorList>
    </citation>
    <scope>VARIANTS TYR-69; LEU-117; GLY-272; LEU-329 AND TYR-365</scope>
</reference>
<comment type="function">
    <text evidence="3 8 10 11 14 16 17 18">Metalloprotease that is part of the quality control system in the inner membrane of mitochondria (PubMed:20038677, PubMed:25605331, PubMed:32132706, PubMed:32132707). Activated in response to various mitochondrial stress, leading to the proteolytic cleavage of target proteins, such as OPA1, UQCC3 and DELE1 (PubMed:20038677, PubMed:25275009, PubMed:32132706, PubMed:32132707). Involved in the fusion of the mitochondrial inner membranes by mediating cleavage of OPA1 at S1 position, generating the soluble OPA1 (S-OPA1), which cooperates with the membrane form (L-OPA1) to coordinate the fusion of mitochondrial inner membranes (PubMed:31922487). Following stress conditions that induce loss of mitochondrial membrane potential, mediates cleavage of OPA1, leading to excess production of soluble OPA1 (S-OPA1) and negative regulation of mitochondrial fusion (PubMed:20038677, PubMed:25275009). Involved in mitochondrial safeguard in response to transient mitochondrial membrane depolarization (flickering) by catalyzing cleavage of OPA1, leading to excess production of S-OPA1, preventing mitochondrial hyperfusion (By similarity). Also acts as a regulator of apoptosis: upon BAK and BAX aggregation, mediates cleavage of OPA1, leading to the remodeling of mitochondrial cristae and allowing the release of cytochrome c from mitochondrial cristae (PubMed:25275009). In depolarized mitochondria, may also act as a backup protease for PINK1 by mediating PINK1 cleavage and promoting its subsequent degradation by the proteasome (PubMed:30733118). May also cleave UQCC3 in response to mitochondrial depolarization (PubMed:25605331). Also acts as an activator of the integrated stress response (ISR): in response to mitochondrial stress, mediates cleavage of DELE1 to generate the processed form of DELE1 (S-DELE1), which translocates to the cytosol and activates EIF2AK1/HRI to trigger the ISR (PubMed:32132706, PubMed:32132707). Its role in mitochondrial quality control is essential for regulating lipid metabolism as well as to maintain body temperature and energy expenditure under cold-stress conditions (By similarity). Binds cardiolipin, possibly regulating its protein turnover (By similarity). Required for the stability of the respiratory supercomplexes (By similarity).</text>
</comment>
<comment type="cofactor">
    <cofactor evidence="1">
        <name>Zn(2+)</name>
        <dbReference type="ChEBI" id="CHEBI:29105"/>
    </cofactor>
    <text evidence="1">Binds 1 zinc ion per subunit.</text>
</comment>
<comment type="activity regulation">
    <text evidence="3">Protease activity is activated upon autocatalytic cleavage in response to mitochondrial depolarization.</text>
</comment>
<comment type="subunit">
    <text evidence="3">Homooligomer.</text>
</comment>
<comment type="subcellular location">
    <subcellularLocation>
        <location evidence="18 24">Mitochondrion inner membrane</location>
        <topology evidence="3">Single-pass membrane protein</topology>
    </subcellularLocation>
</comment>
<comment type="alternative products">
    <event type="alternative splicing"/>
    <isoform>
        <id>Q96E52-1</id>
        <name>1</name>
        <sequence type="displayed"/>
    </isoform>
    <isoform>
        <id>Q96E52-2</id>
        <name>2</name>
        <sequence type="described" ref="VSP_027958"/>
    </isoform>
</comment>
<comment type="tissue specificity">
    <text evidence="6">Widely expressed, with strong expression in the heart, skeletal muscle, kidney and liver.</text>
</comment>
<comment type="domain">
    <text evidence="3">The stress-sensor region regulates proteolysis and activation.</text>
</comment>
<comment type="PTM">
    <text evidence="2 15">May form a redox-dependent disulfide bond (By similarity). Exists in a semi-oxidized state and is activated by prolonged hypoxia (PubMed:31044600).</text>
</comment>
<comment type="PTM">
    <text evidence="3 12 13">Autocatalytically cleaved in response to mitochondrial depolarization both at the N-terminus and C-terminus to generate the short active form (S-OMA1) (By similarity). Autocatalytic processing at the C-terminus takes place at residues 447-456 (By similarity). The S-OMA1 form is unstable (By similarity). OMA1 pre-processing by AFG3L2 may participate in maturation before OMA1 autocatalytic cleavage (PubMed:29545505). Degraded by YMEL1 in response to membrane depolarization (PubMed:26923599). Protein turnover is regulated by prohibitin (PHB and PHB2), which promotes degradation of OMA1 in a cardiolipin-binding manner (By similarity).</text>
</comment>
<comment type="similarity">
    <text evidence="22">Belongs to the peptidase M48 family.</text>
</comment>
<comment type="caution">
    <text evidence="23 24">Was initially reported to localize in the endoplasmic reticulum (PubMed:12886954). However, it was later shown that it localizes to mitochondrion (PubMed:20038677).</text>
</comment>
<comment type="sequence caution" evidence="22">
    <conflict type="erroneous initiation">
        <sequence resource="EMBL-CDS" id="BAC03583"/>
    </conflict>
    <text>Truncated N-terminus.</text>
</comment>